<protein>
    <recommendedName>
        <fullName evidence="3">Large ribosomal subunit protein uL29m</fullName>
    </recommendedName>
    <alternativeName>
        <fullName>54S ribosomal protein L4, mitochondrial</fullName>
    </alternativeName>
</protein>
<accession>Q4X156</accession>
<evidence type="ECO:0000250" key="1"/>
<evidence type="ECO:0000255" key="2"/>
<evidence type="ECO:0000305" key="3"/>
<reference key="1">
    <citation type="journal article" date="2005" name="Nature">
        <title>Genomic sequence of the pathogenic and allergenic filamentous fungus Aspergillus fumigatus.</title>
        <authorList>
            <person name="Nierman W.C."/>
            <person name="Pain A."/>
            <person name="Anderson M.J."/>
            <person name="Wortman J.R."/>
            <person name="Kim H.S."/>
            <person name="Arroyo J."/>
            <person name="Berriman M."/>
            <person name="Abe K."/>
            <person name="Archer D.B."/>
            <person name="Bermejo C."/>
            <person name="Bennett J.W."/>
            <person name="Bowyer P."/>
            <person name="Chen D."/>
            <person name="Collins M."/>
            <person name="Coulsen R."/>
            <person name="Davies R."/>
            <person name="Dyer P.S."/>
            <person name="Farman M.L."/>
            <person name="Fedorova N."/>
            <person name="Fedorova N.D."/>
            <person name="Feldblyum T.V."/>
            <person name="Fischer R."/>
            <person name="Fosker N."/>
            <person name="Fraser A."/>
            <person name="Garcia J.L."/>
            <person name="Garcia M.J."/>
            <person name="Goble A."/>
            <person name="Goldman G.H."/>
            <person name="Gomi K."/>
            <person name="Griffith-Jones S."/>
            <person name="Gwilliam R."/>
            <person name="Haas B.J."/>
            <person name="Haas H."/>
            <person name="Harris D.E."/>
            <person name="Horiuchi H."/>
            <person name="Huang J."/>
            <person name="Humphray S."/>
            <person name="Jimenez J."/>
            <person name="Keller N."/>
            <person name="Khouri H."/>
            <person name="Kitamoto K."/>
            <person name="Kobayashi T."/>
            <person name="Konzack S."/>
            <person name="Kulkarni R."/>
            <person name="Kumagai T."/>
            <person name="Lafton A."/>
            <person name="Latge J.-P."/>
            <person name="Li W."/>
            <person name="Lord A."/>
            <person name="Lu C."/>
            <person name="Majoros W.H."/>
            <person name="May G.S."/>
            <person name="Miller B.L."/>
            <person name="Mohamoud Y."/>
            <person name="Molina M."/>
            <person name="Monod M."/>
            <person name="Mouyna I."/>
            <person name="Mulligan S."/>
            <person name="Murphy L.D."/>
            <person name="O'Neil S."/>
            <person name="Paulsen I."/>
            <person name="Penalva M.A."/>
            <person name="Pertea M."/>
            <person name="Price C."/>
            <person name="Pritchard B.L."/>
            <person name="Quail M.A."/>
            <person name="Rabbinowitsch E."/>
            <person name="Rawlins N."/>
            <person name="Rajandream M.A."/>
            <person name="Reichard U."/>
            <person name="Renauld H."/>
            <person name="Robson G.D."/>
            <person name="Rodriguez de Cordoba S."/>
            <person name="Rodriguez-Pena J.M."/>
            <person name="Ronning C.M."/>
            <person name="Rutter S."/>
            <person name="Salzberg S.L."/>
            <person name="Sanchez M."/>
            <person name="Sanchez-Ferrero J.C."/>
            <person name="Saunders D."/>
            <person name="Seeger K."/>
            <person name="Squares R."/>
            <person name="Squares S."/>
            <person name="Takeuchi M."/>
            <person name="Tekaia F."/>
            <person name="Turner G."/>
            <person name="Vazquez de Aldana C.R."/>
            <person name="Weidman J."/>
            <person name="White O."/>
            <person name="Woodward J.R."/>
            <person name="Yu J.-H."/>
            <person name="Fraser C.M."/>
            <person name="Galagan J.E."/>
            <person name="Asai K."/>
            <person name="Machida M."/>
            <person name="Hall N."/>
            <person name="Barrell B.G."/>
            <person name="Denning D.W."/>
        </authorList>
    </citation>
    <scope>NUCLEOTIDE SEQUENCE [LARGE SCALE GENOMIC DNA]</scope>
    <source>
        <strain>ATCC MYA-4609 / CBS 101355 / FGSC A1100 / Af293</strain>
    </source>
</reference>
<feature type="transit peptide" description="Mitochondrion" evidence="2">
    <location>
        <begin position="1"/>
        <end status="unknown"/>
    </location>
</feature>
<feature type="chain" id="PRO_0000372391" description="Large ribosomal subunit protein uL29m">
    <location>
        <begin status="unknown"/>
        <end position="217"/>
    </location>
</feature>
<comment type="subunit">
    <text evidence="1">Component of the mitochondrial large ribosomal subunit. Mature mitochondrial ribosomes consist of a small (37S) and a large (54S) subunit. The 37S subunit contains at least 33 different proteins and 1 molecule of RNA (15S). The 54S subunit contains at least 45 different proteins and 1 molecule of RNA (21S) (By similarity).</text>
</comment>
<comment type="subcellular location">
    <subcellularLocation>
        <location evidence="1">Mitochondrion</location>
    </subcellularLocation>
</comment>
<comment type="similarity">
    <text evidence="3">Belongs to the universal ribosomal protein uL29 family.</text>
</comment>
<organism>
    <name type="scientific">Aspergillus fumigatus (strain ATCC MYA-4609 / CBS 101355 / FGSC A1100 / Af293)</name>
    <name type="common">Neosartorya fumigata</name>
    <dbReference type="NCBI Taxonomy" id="330879"/>
    <lineage>
        <taxon>Eukaryota</taxon>
        <taxon>Fungi</taxon>
        <taxon>Dikarya</taxon>
        <taxon>Ascomycota</taxon>
        <taxon>Pezizomycotina</taxon>
        <taxon>Eurotiomycetes</taxon>
        <taxon>Eurotiomycetidae</taxon>
        <taxon>Eurotiales</taxon>
        <taxon>Aspergillaceae</taxon>
        <taxon>Aspergillus</taxon>
        <taxon>Aspergillus subgen. Fumigati</taxon>
    </lineage>
</organism>
<keyword id="KW-0496">Mitochondrion</keyword>
<keyword id="KW-1185">Reference proteome</keyword>
<keyword id="KW-0687">Ribonucleoprotein</keyword>
<keyword id="KW-0689">Ribosomal protein</keyword>
<keyword id="KW-0809">Transit peptide</keyword>
<proteinExistence type="inferred from homology"/>
<sequence>MHRQSVARLTRQCHGLPLVELPPPYLAPSLHFSLIRTPVQCSSFSSTAVVAGRGRDLNKTRGVSAIHRTGPRFKLGVSKYPLPKPVSPAALEKREATPNHGLWGFFPRDRSALSTPEYDIAHGRSWSIQELREKSWEDLHCLWWVCVKERNRIATSNLERQRLKAGYGEWEARERDRTIRITQNGIKHVLRERWYAWEDAKRLYKKGYRPQDEENQE</sequence>
<name>RM04_ASPFU</name>
<dbReference type="EMBL" id="AAHF01000001">
    <property type="protein sequence ID" value="EAL93409.1"/>
    <property type="molecule type" value="Genomic_DNA"/>
</dbReference>
<dbReference type="RefSeq" id="XP_755447.1">
    <property type="nucleotide sequence ID" value="XM_750354.1"/>
</dbReference>
<dbReference type="SMR" id="Q4X156"/>
<dbReference type="STRING" id="330879.Q4X156"/>
<dbReference type="EnsemblFungi" id="EAL93409">
    <property type="protein sequence ID" value="EAL93409"/>
    <property type="gene ID" value="AFUA_2G11140"/>
</dbReference>
<dbReference type="GeneID" id="3513383"/>
<dbReference type="KEGG" id="afm:AFUA_2G11140"/>
<dbReference type="VEuPathDB" id="FungiDB:Afu2g11140"/>
<dbReference type="eggNOG" id="KOG3331">
    <property type="taxonomic scope" value="Eukaryota"/>
</dbReference>
<dbReference type="HOGENOM" id="CLU_063281_0_0_1"/>
<dbReference type="InParanoid" id="Q4X156"/>
<dbReference type="OMA" id="YAHGRAW"/>
<dbReference type="OrthoDB" id="270763at2759"/>
<dbReference type="Proteomes" id="UP000002530">
    <property type="component" value="Chromosome 2"/>
</dbReference>
<dbReference type="GO" id="GO:0005762">
    <property type="term" value="C:mitochondrial large ribosomal subunit"/>
    <property type="evidence" value="ECO:0000318"/>
    <property type="project" value="GO_Central"/>
</dbReference>
<dbReference type="GO" id="GO:0003735">
    <property type="term" value="F:structural constituent of ribosome"/>
    <property type="evidence" value="ECO:0000318"/>
    <property type="project" value="GO_Central"/>
</dbReference>
<dbReference type="GO" id="GO:0032543">
    <property type="term" value="P:mitochondrial translation"/>
    <property type="evidence" value="ECO:0000318"/>
    <property type="project" value="GO_Central"/>
</dbReference>
<dbReference type="Gene3D" id="6.10.330.20">
    <property type="match status" value="1"/>
</dbReference>
<dbReference type="InterPro" id="IPR038340">
    <property type="entry name" value="MRP-L47_sf"/>
</dbReference>
<dbReference type="InterPro" id="IPR010729">
    <property type="entry name" value="Ribosomal_uL29_mit"/>
</dbReference>
<dbReference type="PANTHER" id="PTHR21183:SF18">
    <property type="entry name" value="LARGE RIBOSOMAL SUBUNIT PROTEIN UL29M"/>
    <property type="match status" value="1"/>
</dbReference>
<dbReference type="PANTHER" id="PTHR21183">
    <property type="entry name" value="RIBOSOMAL PROTEIN L47, MITOCHONDRIAL-RELATED"/>
    <property type="match status" value="1"/>
</dbReference>
<dbReference type="Pfam" id="PF06984">
    <property type="entry name" value="MRP-L47"/>
    <property type="match status" value="1"/>
</dbReference>
<gene>
    <name type="primary">mrpl4</name>
    <name type="ORF">AFUA_2G11140</name>
</gene>